<comment type="function">
    <text evidence="1">Part of the ABC transporter complex CysAWTP involved in sulfate/thiosulfate import. Responsible for energy coupling to the transport system.</text>
</comment>
<comment type="catalytic activity">
    <reaction evidence="1">
        <text>sulfate(out) + ATP + H2O = sulfate(in) + ADP + phosphate + H(+)</text>
        <dbReference type="Rhea" id="RHEA:10192"/>
        <dbReference type="ChEBI" id="CHEBI:15377"/>
        <dbReference type="ChEBI" id="CHEBI:15378"/>
        <dbReference type="ChEBI" id="CHEBI:16189"/>
        <dbReference type="ChEBI" id="CHEBI:30616"/>
        <dbReference type="ChEBI" id="CHEBI:43474"/>
        <dbReference type="ChEBI" id="CHEBI:456216"/>
        <dbReference type="EC" id="7.3.2.3"/>
    </reaction>
</comment>
<comment type="catalytic activity">
    <reaction evidence="1">
        <text>thiosulfate(out) + ATP + H2O = thiosulfate(in) + ADP + phosphate + H(+)</text>
        <dbReference type="Rhea" id="RHEA:29871"/>
        <dbReference type="ChEBI" id="CHEBI:15377"/>
        <dbReference type="ChEBI" id="CHEBI:15378"/>
        <dbReference type="ChEBI" id="CHEBI:30616"/>
        <dbReference type="ChEBI" id="CHEBI:33542"/>
        <dbReference type="ChEBI" id="CHEBI:43474"/>
        <dbReference type="ChEBI" id="CHEBI:456216"/>
        <dbReference type="EC" id="7.3.2.3"/>
    </reaction>
</comment>
<comment type="subunit">
    <text evidence="1">The complex is composed of two ATP-binding proteins (CysA), two transmembrane proteins (CysT and CysW) and a solute-binding protein (CysP).</text>
</comment>
<comment type="subcellular location">
    <subcellularLocation>
        <location evidence="1">Cell membrane</location>
        <topology evidence="1">Peripheral membrane protein</topology>
    </subcellularLocation>
</comment>
<comment type="similarity">
    <text evidence="1">Belongs to the ABC transporter superfamily. Sulfate/tungstate importer (TC 3.A.1.6) family.</text>
</comment>
<organism>
    <name type="scientific">Mycobacterium bovis (strain ATCC BAA-935 / AF2122/97)</name>
    <dbReference type="NCBI Taxonomy" id="233413"/>
    <lineage>
        <taxon>Bacteria</taxon>
        <taxon>Bacillati</taxon>
        <taxon>Actinomycetota</taxon>
        <taxon>Actinomycetes</taxon>
        <taxon>Mycobacteriales</taxon>
        <taxon>Mycobacteriaceae</taxon>
        <taxon>Mycobacterium</taxon>
        <taxon>Mycobacterium tuberculosis complex</taxon>
    </lineage>
</organism>
<name>CYSA_MYCBO</name>
<reference key="1">
    <citation type="journal article" date="2003" name="Proc. Natl. Acad. Sci. U.S.A.">
        <title>The complete genome sequence of Mycobacterium bovis.</title>
        <authorList>
            <person name="Garnier T."/>
            <person name="Eiglmeier K."/>
            <person name="Camus J.-C."/>
            <person name="Medina N."/>
            <person name="Mansoor H."/>
            <person name="Pryor M."/>
            <person name="Duthoy S."/>
            <person name="Grondin S."/>
            <person name="Lacroix C."/>
            <person name="Monsempe C."/>
            <person name="Simon S."/>
            <person name="Harris B."/>
            <person name="Atkin R."/>
            <person name="Doggett J."/>
            <person name="Mayes R."/>
            <person name="Keating L."/>
            <person name="Wheeler P.R."/>
            <person name="Parkhill J."/>
            <person name="Barrell B.G."/>
            <person name="Cole S.T."/>
            <person name="Gordon S.V."/>
            <person name="Hewinson R.G."/>
        </authorList>
    </citation>
    <scope>NUCLEOTIDE SEQUENCE [LARGE SCALE GENOMIC DNA]</scope>
    <source>
        <strain>ATCC BAA-935 / AF2122/97</strain>
    </source>
</reference>
<reference key="2">
    <citation type="journal article" date="2017" name="Genome Announc.">
        <title>Updated reference genome sequence and annotation of Mycobacterium bovis AF2122/97.</title>
        <authorList>
            <person name="Malone K.M."/>
            <person name="Farrell D."/>
            <person name="Stuber T.P."/>
            <person name="Schubert O.T."/>
            <person name="Aebersold R."/>
            <person name="Robbe-Austerman S."/>
            <person name="Gordon S.V."/>
        </authorList>
    </citation>
    <scope>NUCLEOTIDE SEQUENCE [LARGE SCALE GENOMIC DNA]</scope>
    <scope>GENOME REANNOTATION</scope>
    <source>
        <strain>ATCC BAA-935 / AF2122/97</strain>
    </source>
</reference>
<sequence>MTYAIVVADATKRYGDFVALDHVDFVVPTGSLTALLGPSGSGKSTLLRTIAGLDQPDTGTITINGRDVTRVPPQRRGIGFVFQHYAAFKHLTVRDNVAFGLKIRKRPKAEIKAKVDNLLQVVGLSGFQSRYPNQLSGGQRQRMALARALAVDPEVLLLDEPFGALDAKVREELRAWLRRLHDEVHVTTVLVTHDQAEALDVADRIAVLHKGRIEQVGSPTDVYDAPANAFVMSFLGAVSTLNGSLVRPHDIRVGRTPNMAVAAADGTAGSTGVLRAVVDRVVVLGFEVRVELTSAATGGAFTAQITRGDAEALALREGDTVYVRATRVPPIAGGVSGVDDAGVERVKVTST</sequence>
<keyword id="KW-0067">ATP-binding</keyword>
<keyword id="KW-1003">Cell membrane</keyword>
<keyword id="KW-0472">Membrane</keyword>
<keyword id="KW-0547">Nucleotide-binding</keyword>
<keyword id="KW-1185">Reference proteome</keyword>
<keyword id="KW-0764">Sulfate transport</keyword>
<keyword id="KW-1278">Translocase</keyword>
<keyword id="KW-0813">Transport</keyword>
<accession>P0A4W3</accession>
<accession>A0A1R3Y3A0</accession>
<accession>P71747</accession>
<accession>X2BKK1</accession>
<gene>
    <name evidence="1" type="primary">cysA</name>
    <name type="ordered locus">BQ2027_MB2419C</name>
</gene>
<dbReference type="EC" id="7.3.2.3" evidence="1"/>
<dbReference type="EMBL" id="LT708304">
    <property type="protein sequence ID" value="SIU01034.1"/>
    <property type="molecule type" value="Genomic_DNA"/>
</dbReference>
<dbReference type="RefSeq" id="NP_856068.1">
    <property type="nucleotide sequence ID" value="NC_002945.3"/>
</dbReference>
<dbReference type="RefSeq" id="WP_003412325.1">
    <property type="nucleotide sequence ID" value="NC_002945.4"/>
</dbReference>
<dbReference type="SMR" id="P0A4W3"/>
<dbReference type="KEGG" id="mbo:BQ2027_MB2419C"/>
<dbReference type="PATRIC" id="fig|233413.5.peg.2660"/>
<dbReference type="Proteomes" id="UP000001419">
    <property type="component" value="Chromosome"/>
</dbReference>
<dbReference type="GO" id="GO:0043190">
    <property type="term" value="C:ATP-binding cassette (ABC) transporter complex"/>
    <property type="evidence" value="ECO:0007669"/>
    <property type="project" value="InterPro"/>
</dbReference>
<dbReference type="GO" id="GO:0015419">
    <property type="term" value="F:ABC-type sulfate transporter activity"/>
    <property type="evidence" value="ECO:0007669"/>
    <property type="project" value="InterPro"/>
</dbReference>
<dbReference type="GO" id="GO:0102025">
    <property type="term" value="F:ABC-type thiosulfate transporter activity"/>
    <property type="evidence" value="ECO:0007669"/>
    <property type="project" value="RHEA"/>
</dbReference>
<dbReference type="GO" id="GO:0005524">
    <property type="term" value="F:ATP binding"/>
    <property type="evidence" value="ECO:0007669"/>
    <property type="project" value="UniProtKB-KW"/>
</dbReference>
<dbReference type="GO" id="GO:0016887">
    <property type="term" value="F:ATP hydrolysis activity"/>
    <property type="evidence" value="ECO:0007669"/>
    <property type="project" value="InterPro"/>
</dbReference>
<dbReference type="CDD" id="cd03296">
    <property type="entry name" value="ABC_CysA_sulfate_importer"/>
    <property type="match status" value="1"/>
</dbReference>
<dbReference type="FunFam" id="3.40.50.300:FF:001655">
    <property type="entry name" value="Sulfate/thiosulfate import ATP-binding protein CysA"/>
    <property type="match status" value="1"/>
</dbReference>
<dbReference type="Gene3D" id="3.40.50.300">
    <property type="entry name" value="P-loop containing nucleotide triphosphate hydrolases"/>
    <property type="match status" value="1"/>
</dbReference>
<dbReference type="InterPro" id="IPR003593">
    <property type="entry name" value="AAA+_ATPase"/>
</dbReference>
<dbReference type="InterPro" id="IPR050093">
    <property type="entry name" value="ABC_SmlMolc_Importer"/>
</dbReference>
<dbReference type="InterPro" id="IPR003439">
    <property type="entry name" value="ABC_transporter-like_ATP-bd"/>
</dbReference>
<dbReference type="InterPro" id="IPR017871">
    <property type="entry name" value="ABC_transporter-like_CS"/>
</dbReference>
<dbReference type="InterPro" id="IPR008995">
    <property type="entry name" value="Mo/tungstate-bd_C_term_dom"/>
</dbReference>
<dbReference type="InterPro" id="IPR027417">
    <property type="entry name" value="P-loop_NTPase"/>
</dbReference>
<dbReference type="InterPro" id="IPR005666">
    <property type="entry name" value="Sulph_transpt1"/>
</dbReference>
<dbReference type="InterPro" id="IPR024765">
    <property type="entry name" value="TOBE-like"/>
</dbReference>
<dbReference type="NCBIfam" id="TIGR00968">
    <property type="entry name" value="3a0106s01"/>
    <property type="match status" value="1"/>
</dbReference>
<dbReference type="PANTHER" id="PTHR42781">
    <property type="entry name" value="SPERMIDINE/PUTRESCINE IMPORT ATP-BINDING PROTEIN POTA"/>
    <property type="match status" value="1"/>
</dbReference>
<dbReference type="PANTHER" id="PTHR42781:SF4">
    <property type="entry name" value="SPERMIDINE_PUTRESCINE IMPORT ATP-BINDING PROTEIN POTA"/>
    <property type="match status" value="1"/>
</dbReference>
<dbReference type="Pfam" id="PF00005">
    <property type="entry name" value="ABC_tran"/>
    <property type="match status" value="1"/>
</dbReference>
<dbReference type="Pfam" id="PF12857">
    <property type="entry name" value="TOBE_3"/>
    <property type="match status" value="1"/>
</dbReference>
<dbReference type="SMART" id="SM00382">
    <property type="entry name" value="AAA"/>
    <property type="match status" value="1"/>
</dbReference>
<dbReference type="SUPFAM" id="SSF50331">
    <property type="entry name" value="MOP-like"/>
    <property type="match status" value="1"/>
</dbReference>
<dbReference type="SUPFAM" id="SSF52540">
    <property type="entry name" value="P-loop containing nucleoside triphosphate hydrolases"/>
    <property type="match status" value="1"/>
</dbReference>
<dbReference type="PROSITE" id="PS00211">
    <property type="entry name" value="ABC_TRANSPORTER_1"/>
    <property type="match status" value="1"/>
</dbReference>
<dbReference type="PROSITE" id="PS50893">
    <property type="entry name" value="ABC_TRANSPORTER_2"/>
    <property type="match status" value="1"/>
</dbReference>
<dbReference type="PROSITE" id="PS51237">
    <property type="entry name" value="CYSA"/>
    <property type="match status" value="1"/>
</dbReference>
<evidence type="ECO:0000255" key="1">
    <source>
        <dbReference type="HAMAP-Rule" id="MF_01701"/>
    </source>
</evidence>
<proteinExistence type="inferred from homology"/>
<protein>
    <recommendedName>
        <fullName evidence="1">Sulfate/thiosulfate import ATP-binding protein CysA</fullName>
        <ecNumber evidence="1">7.3.2.3</ecNumber>
    </recommendedName>
    <alternativeName>
        <fullName evidence="1">Sulfate-transporting ATPase</fullName>
    </alternativeName>
</protein>
<feature type="chain" id="PRO_0000092274" description="Sulfate/thiosulfate import ATP-binding protein CysA">
    <location>
        <begin position="1"/>
        <end position="351"/>
    </location>
</feature>
<feature type="domain" description="ABC transporter" evidence="1">
    <location>
        <begin position="5"/>
        <end position="235"/>
    </location>
</feature>
<feature type="binding site" evidence="1">
    <location>
        <begin position="37"/>
        <end position="44"/>
    </location>
    <ligand>
        <name>ATP</name>
        <dbReference type="ChEBI" id="CHEBI:30616"/>
    </ligand>
</feature>